<dbReference type="EC" id="2.7.7.6" evidence="1"/>
<dbReference type="EMBL" id="CP000655">
    <property type="protein sequence ID" value="ABP34293.1"/>
    <property type="molecule type" value="Genomic_DNA"/>
</dbReference>
<dbReference type="RefSeq" id="WP_011902918.1">
    <property type="nucleotide sequence ID" value="NC_009379.1"/>
</dbReference>
<dbReference type="SMR" id="A4SXS9"/>
<dbReference type="GeneID" id="83596908"/>
<dbReference type="KEGG" id="pnu:Pnuc_1077"/>
<dbReference type="eggNOG" id="COG1758">
    <property type="taxonomic scope" value="Bacteria"/>
</dbReference>
<dbReference type="HOGENOM" id="CLU_125406_5_2_4"/>
<dbReference type="Proteomes" id="UP000000231">
    <property type="component" value="Chromosome"/>
</dbReference>
<dbReference type="GO" id="GO:0000428">
    <property type="term" value="C:DNA-directed RNA polymerase complex"/>
    <property type="evidence" value="ECO:0007669"/>
    <property type="project" value="UniProtKB-KW"/>
</dbReference>
<dbReference type="GO" id="GO:0003677">
    <property type="term" value="F:DNA binding"/>
    <property type="evidence" value="ECO:0007669"/>
    <property type="project" value="UniProtKB-UniRule"/>
</dbReference>
<dbReference type="GO" id="GO:0003899">
    <property type="term" value="F:DNA-directed RNA polymerase activity"/>
    <property type="evidence" value="ECO:0007669"/>
    <property type="project" value="UniProtKB-UniRule"/>
</dbReference>
<dbReference type="GO" id="GO:0006351">
    <property type="term" value="P:DNA-templated transcription"/>
    <property type="evidence" value="ECO:0007669"/>
    <property type="project" value="UniProtKB-UniRule"/>
</dbReference>
<dbReference type="Gene3D" id="3.90.940.10">
    <property type="match status" value="1"/>
</dbReference>
<dbReference type="HAMAP" id="MF_00366">
    <property type="entry name" value="RNApol_bact_RpoZ"/>
    <property type="match status" value="1"/>
</dbReference>
<dbReference type="InterPro" id="IPR003716">
    <property type="entry name" value="DNA-dir_RNA_pol_omega"/>
</dbReference>
<dbReference type="InterPro" id="IPR006110">
    <property type="entry name" value="Pol_omega/Rpo6/RPB6"/>
</dbReference>
<dbReference type="InterPro" id="IPR036161">
    <property type="entry name" value="RPB6/omega-like_sf"/>
</dbReference>
<dbReference type="NCBIfam" id="TIGR00690">
    <property type="entry name" value="rpoZ"/>
    <property type="match status" value="1"/>
</dbReference>
<dbReference type="PANTHER" id="PTHR34476">
    <property type="entry name" value="DNA-DIRECTED RNA POLYMERASE SUBUNIT OMEGA"/>
    <property type="match status" value="1"/>
</dbReference>
<dbReference type="PANTHER" id="PTHR34476:SF1">
    <property type="entry name" value="DNA-DIRECTED RNA POLYMERASE SUBUNIT OMEGA"/>
    <property type="match status" value="1"/>
</dbReference>
<dbReference type="Pfam" id="PF01192">
    <property type="entry name" value="RNA_pol_Rpb6"/>
    <property type="match status" value="1"/>
</dbReference>
<dbReference type="SMART" id="SM01409">
    <property type="entry name" value="RNA_pol_Rpb6"/>
    <property type="match status" value="1"/>
</dbReference>
<dbReference type="SUPFAM" id="SSF63562">
    <property type="entry name" value="RPB6/omega subunit-like"/>
    <property type="match status" value="1"/>
</dbReference>
<proteinExistence type="inferred from homology"/>
<name>RPOZ_POLAQ</name>
<accession>A4SXS9</accession>
<sequence length="67" mass="7478">MARITVEDCLKTIPNRFELVLAATYRARQLVQGHSPRVESRDKATVVALREVAAGVTDRDMLTKVPL</sequence>
<keyword id="KW-0240">DNA-directed RNA polymerase</keyword>
<keyword id="KW-0548">Nucleotidyltransferase</keyword>
<keyword id="KW-1185">Reference proteome</keyword>
<keyword id="KW-0804">Transcription</keyword>
<keyword id="KW-0808">Transferase</keyword>
<protein>
    <recommendedName>
        <fullName evidence="1">DNA-directed RNA polymerase subunit omega</fullName>
        <shortName evidence="1">RNAP omega subunit</shortName>
        <ecNumber evidence="1">2.7.7.6</ecNumber>
    </recommendedName>
    <alternativeName>
        <fullName evidence="1">RNA polymerase omega subunit</fullName>
    </alternativeName>
    <alternativeName>
        <fullName evidence="1">Transcriptase subunit omega</fullName>
    </alternativeName>
</protein>
<comment type="function">
    <text evidence="1">Promotes RNA polymerase assembly. Latches the N- and C-terminal regions of the beta' subunit thereby facilitating its interaction with the beta and alpha subunits.</text>
</comment>
<comment type="catalytic activity">
    <reaction evidence="1">
        <text>RNA(n) + a ribonucleoside 5'-triphosphate = RNA(n+1) + diphosphate</text>
        <dbReference type="Rhea" id="RHEA:21248"/>
        <dbReference type="Rhea" id="RHEA-COMP:14527"/>
        <dbReference type="Rhea" id="RHEA-COMP:17342"/>
        <dbReference type="ChEBI" id="CHEBI:33019"/>
        <dbReference type="ChEBI" id="CHEBI:61557"/>
        <dbReference type="ChEBI" id="CHEBI:140395"/>
        <dbReference type="EC" id="2.7.7.6"/>
    </reaction>
</comment>
<comment type="subunit">
    <text evidence="1">The RNAP catalytic core consists of 2 alpha, 1 beta, 1 beta' and 1 omega subunit. When a sigma factor is associated with the core the holoenzyme is formed, which can initiate transcription.</text>
</comment>
<comment type="similarity">
    <text evidence="1">Belongs to the RNA polymerase subunit omega family.</text>
</comment>
<evidence type="ECO:0000255" key="1">
    <source>
        <dbReference type="HAMAP-Rule" id="MF_00366"/>
    </source>
</evidence>
<reference key="1">
    <citation type="journal article" date="2012" name="Stand. Genomic Sci.">
        <title>Complete genome sequence of Polynucleobacter necessarius subsp. asymbioticus type strain (QLW-P1DMWA-1(T)).</title>
        <authorList>
            <person name="Meincke L."/>
            <person name="Copeland A."/>
            <person name="Lapidus A."/>
            <person name="Lucas S."/>
            <person name="Berry K.W."/>
            <person name="Del Rio T.G."/>
            <person name="Hammon N."/>
            <person name="Dalin E."/>
            <person name="Tice H."/>
            <person name="Pitluck S."/>
            <person name="Richardson P."/>
            <person name="Bruce D."/>
            <person name="Goodwin L."/>
            <person name="Han C."/>
            <person name="Tapia R."/>
            <person name="Detter J.C."/>
            <person name="Schmutz J."/>
            <person name="Brettin T."/>
            <person name="Larimer F."/>
            <person name="Land M."/>
            <person name="Hauser L."/>
            <person name="Kyrpides N.C."/>
            <person name="Ivanova N."/>
            <person name="Goker M."/>
            <person name="Woyke T."/>
            <person name="Wu Q.L."/>
            <person name="Pockl M."/>
            <person name="Hahn M.W."/>
            <person name="Klenk H.P."/>
        </authorList>
    </citation>
    <scope>NUCLEOTIDE SEQUENCE [LARGE SCALE GENOMIC DNA]</scope>
    <source>
        <strain>DSM 18221 / CIP 109841 / QLW-P1DMWA-1</strain>
    </source>
</reference>
<organism>
    <name type="scientific">Polynucleobacter asymbioticus (strain DSM 18221 / CIP 109841 / QLW-P1DMWA-1)</name>
    <name type="common">Polynucleobacter necessarius subsp. asymbioticus</name>
    <dbReference type="NCBI Taxonomy" id="312153"/>
    <lineage>
        <taxon>Bacteria</taxon>
        <taxon>Pseudomonadati</taxon>
        <taxon>Pseudomonadota</taxon>
        <taxon>Betaproteobacteria</taxon>
        <taxon>Burkholderiales</taxon>
        <taxon>Burkholderiaceae</taxon>
        <taxon>Polynucleobacter</taxon>
    </lineage>
</organism>
<gene>
    <name evidence="1" type="primary">rpoZ</name>
    <name type="ordered locus">Pnuc_1077</name>
</gene>
<feature type="chain" id="PRO_1000079639" description="DNA-directed RNA polymerase subunit omega">
    <location>
        <begin position="1"/>
        <end position="67"/>
    </location>
</feature>